<name>C96T2_NARAP</name>
<sequence>MATSSSAWLMFSDHYPEILIAIACFLIFSLLLSARSSSEDSLPYNWPIFGMLPAIISNNQFNDFTTARLRKMGWTFIFKGPWLLDMDYIFTCDPSNINHMFNDNFENYPKGELGKVFDIFGNNIFNADGDLWHDHRKMAQTILWDGNYRTMQATFIRNKMDNALIPILDSAACKRKPVDLQDVLLRFTFDTSCFSVLAADPESLTMEFPPVPFSKAADQALDAALTRHITPRLIWKLKRFFNVGSERTLAVAWKVIDSYIYDKIAELKAKRKLVGKINSYDAVSFYMDNFNIHDDKFLRDNAFTYLLAQRNTQSLTMTWLFYALFENPKVELKILSELKSIVDESSERKFNDGFTLFDSNMIQSAIYLHAALCEALRIYPPVPFEIKDAHKADVLPSGHKVRAGEKILFSPYAMARMKGIWGDDCLEFKPERWITGNGTLKHEPAYKFFAFSAGPRICLGKELSFTQMKMVVATIIYNFHLQMVKGHVVEQSNSILMDMKHGLMVQVRKRSVM</sequence>
<dbReference type="EC" id="1.14.19.50" evidence="1"/>
<dbReference type="EMBL" id="KT693312">
    <property type="protein sequence ID" value="AMO65742.1"/>
    <property type="molecule type" value="mRNA"/>
</dbReference>
<dbReference type="SMR" id="A0A140IL91"/>
<dbReference type="GO" id="GO:0016020">
    <property type="term" value="C:membrane"/>
    <property type="evidence" value="ECO:0007669"/>
    <property type="project" value="UniProtKB-SubCell"/>
</dbReference>
<dbReference type="GO" id="GO:0020037">
    <property type="term" value="F:heme binding"/>
    <property type="evidence" value="ECO:0007669"/>
    <property type="project" value="InterPro"/>
</dbReference>
<dbReference type="GO" id="GO:0005506">
    <property type="term" value="F:iron ion binding"/>
    <property type="evidence" value="ECO:0007669"/>
    <property type="project" value="InterPro"/>
</dbReference>
<dbReference type="GO" id="GO:0004497">
    <property type="term" value="F:monooxygenase activity"/>
    <property type="evidence" value="ECO:0007669"/>
    <property type="project" value="UniProtKB-KW"/>
</dbReference>
<dbReference type="GO" id="GO:0016705">
    <property type="term" value="F:oxidoreductase activity, acting on paired donors, with incorporation or reduction of molecular oxygen"/>
    <property type="evidence" value="ECO:0007669"/>
    <property type="project" value="InterPro"/>
</dbReference>
<dbReference type="GO" id="GO:0009820">
    <property type="term" value="P:alkaloid metabolic process"/>
    <property type="evidence" value="ECO:0007669"/>
    <property type="project" value="UniProtKB-KW"/>
</dbReference>
<dbReference type="GO" id="GO:0006629">
    <property type="term" value="P:lipid metabolic process"/>
    <property type="evidence" value="ECO:0007669"/>
    <property type="project" value="UniProtKB-ARBA"/>
</dbReference>
<dbReference type="CDD" id="cd11064">
    <property type="entry name" value="CYP86A"/>
    <property type="match status" value="1"/>
</dbReference>
<dbReference type="Gene3D" id="1.10.630.10">
    <property type="entry name" value="Cytochrome P450"/>
    <property type="match status" value="1"/>
</dbReference>
<dbReference type="InterPro" id="IPR001128">
    <property type="entry name" value="Cyt_P450"/>
</dbReference>
<dbReference type="InterPro" id="IPR017972">
    <property type="entry name" value="Cyt_P450_CS"/>
</dbReference>
<dbReference type="InterPro" id="IPR002401">
    <property type="entry name" value="Cyt_P450_E_grp-I"/>
</dbReference>
<dbReference type="InterPro" id="IPR036396">
    <property type="entry name" value="Cyt_P450_sf"/>
</dbReference>
<dbReference type="PANTHER" id="PTHR24296">
    <property type="entry name" value="CYTOCHROME P450"/>
    <property type="match status" value="1"/>
</dbReference>
<dbReference type="Pfam" id="PF00067">
    <property type="entry name" value="p450"/>
    <property type="match status" value="1"/>
</dbReference>
<dbReference type="PRINTS" id="PR00463">
    <property type="entry name" value="EP450I"/>
</dbReference>
<dbReference type="PRINTS" id="PR00385">
    <property type="entry name" value="P450"/>
</dbReference>
<dbReference type="SUPFAM" id="SSF48264">
    <property type="entry name" value="Cytochrome P450"/>
    <property type="match status" value="1"/>
</dbReference>
<dbReference type="PROSITE" id="PS00086">
    <property type="entry name" value="CYTOCHROME_P450"/>
    <property type="match status" value="1"/>
</dbReference>
<protein>
    <recommendedName>
        <fullName evidence="4">Noroxomaritidine synthase 2</fullName>
        <ecNumber evidence="1">1.14.19.50</ecNumber>
    </recommendedName>
    <alternativeName>
        <fullName evidence="4">CYP96T2</fullName>
    </alternativeName>
    <alternativeName>
        <fullName evidence="4">Cytochrome P450 96T2</fullName>
    </alternativeName>
</protein>
<evidence type="ECO:0000250" key="1">
    <source>
        <dbReference type="UniProtKB" id="A0A140IL90"/>
    </source>
</evidence>
<evidence type="ECO:0000250" key="2">
    <source>
        <dbReference type="UniProtKB" id="Q96242"/>
    </source>
</evidence>
<evidence type="ECO:0000255" key="3"/>
<evidence type="ECO:0000303" key="4">
    <source>
    </source>
</evidence>
<evidence type="ECO:0000305" key="5"/>
<reference key="1">
    <citation type="journal article" date="2016" name="Front. Plant Sci.">
        <title>CYP96T1 of Narcissus sp. aff. pseudonarcissus catalyzes formation of the para-para' C-C phenol couple in the Amaryllidaceae alkaloids.</title>
        <authorList>
            <person name="Kilgore M.B."/>
            <person name="Augustin M.M."/>
            <person name="May G.D."/>
            <person name="Crow J.A."/>
            <person name="Kutchan T.M."/>
        </authorList>
    </citation>
    <scope>NUCLEOTIDE SEQUENCE [MRNA]</scope>
</reference>
<comment type="function">
    <text evidence="1">Cytochrome P450 that catalyzes an intramolecular para-para' C-C phenol coupling of 4'-O-methylnorbelladine in alkaloids biosynthesis, including haemanthamine- and crinamine-type alkaloids, promising anticancer agents. Catalyzes the formation of (10bR,4aS)-noroxomaritidine and (10bS,4aR)-noroxomaritidine from 4'-O-methylnorbelladine.</text>
</comment>
<comment type="catalytic activity">
    <reaction evidence="1">
        <text>4'-O-methylnorbelladine + reduced [NADPH--hemoprotein reductase] + O2 = (10bR,4aS)-noroxomaritidine + oxidized [NADPH--hemoprotein reductase] + 2 H2O + H(+)</text>
        <dbReference type="Rhea" id="RHEA:51260"/>
        <dbReference type="Rhea" id="RHEA-COMP:11964"/>
        <dbReference type="Rhea" id="RHEA-COMP:11965"/>
        <dbReference type="ChEBI" id="CHEBI:15377"/>
        <dbReference type="ChEBI" id="CHEBI:15378"/>
        <dbReference type="ChEBI" id="CHEBI:15379"/>
        <dbReference type="ChEBI" id="CHEBI:57618"/>
        <dbReference type="ChEBI" id="CHEBI:58210"/>
        <dbReference type="ChEBI" id="CHEBI:133993"/>
        <dbReference type="ChEBI" id="CHEBI:133995"/>
        <dbReference type="EC" id="1.14.19.50"/>
    </reaction>
</comment>
<comment type="catalytic activity">
    <reaction evidence="1">
        <text>4'-O-methylnorbelladine + reduced [NADPH--hemoprotein reductase] + O2 = (10bS,4aR)-noroxomaritidine + oxidized [NADPH--hemoprotein reductase] + 2 H2O + H(+)</text>
        <dbReference type="Rhea" id="RHEA:51264"/>
        <dbReference type="Rhea" id="RHEA-COMP:11964"/>
        <dbReference type="Rhea" id="RHEA-COMP:11965"/>
        <dbReference type="ChEBI" id="CHEBI:15377"/>
        <dbReference type="ChEBI" id="CHEBI:15378"/>
        <dbReference type="ChEBI" id="CHEBI:15379"/>
        <dbReference type="ChEBI" id="CHEBI:57618"/>
        <dbReference type="ChEBI" id="CHEBI:58210"/>
        <dbReference type="ChEBI" id="CHEBI:133993"/>
        <dbReference type="ChEBI" id="CHEBI:133996"/>
        <dbReference type="EC" id="1.14.19.50"/>
    </reaction>
</comment>
<comment type="cofactor">
    <cofactor evidence="2">
        <name>heme</name>
        <dbReference type="ChEBI" id="CHEBI:30413"/>
    </cofactor>
</comment>
<comment type="pathway">
    <text evidence="1">Alkaloid biosynthesis.</text>
</comment>
<comment type="subcellular location">
    <subcellularLocation>
        <location evidence="3">Membrane</location>
        <topology evidence="3">Single-pass membrane protein</topology>
    </subcellularLocation>
</comment>
<comment type="similarity">
    <text evidence="5">Belongs to the cytochrome P450 family.</text>
</comment>
<feature type="chain" id="PRO_0000450648" description="Noroxomaritidine synthase 2">
    <location>
        <begin position="1"/>
        <end position="513"/>
    </location>
</feature>
<feature type="transmembrane region" description="Helical" evidence="3">
    <location>
        <begin position="14"/>
        <end position="34"/>
    </location>
</feature>
<feature type="binding site" description="axial binding residue" evidence="2">
    <location>
        <position position="458"/>
    </location>
    <ligand>
        <name>heme</name>
        <dbReference type="ChEBI" id="CHEBI:30413"/>
    </ligand>
    <ligandPart>
        <name>Fe</name>
        <dbReference type="ChEBI" id="CHEBI:18248"/>
    </ligandPart>
</feature>
<proteinExistence type="evidence at transcript level"/>
<organism>
    <name type="scientific">Narcissus aff. pseudonarcissus MK-2014</name>
    <name type="common">Daffodil</name>
    <dbReference type="NCBI Taxonomy" id="1540222"/>
    <lineage>
        <taxon>Eukaryota</taxon>
        <taxon>Viridiplantae</taxon>
        <taxon>Streptophyta</taxon>
        <taxon>Embryophyta</taxon>
        <taxon>Tracheophyta</taxon>
        <taxon>Spermatophyta</taxon>
        <taxon>Magnoliopsida</taxon>
        <taxon>Liliopsida</taxon>
        <taxon>Asparagales</taxon>
        <taxon>Amaryllidaceae</taxon>
        <taxon>Amaryllidoideae</taxon>
        <taxon>Narcissus</taxon>
    </lineage>
</organism>
<keyword id="KW-0017">Alkaloid metabolism</keyword>
<keyword id="KW-0349">Heme</keyword>
<keyword id="KW-0408">Iron</keyword>
<keyword id="KW-0472">Membrane</keyword>
<keyword id="KW-0479">Metal-binding</keyword>
<keyword id="KW-0503">Monooxygenase</keyword>
<keyword id="KW-0560">Oxidoreductase</keyword>
<keyword id="KW-0812">Transmembrane</keyword>
<keyword id="KW-1133">Transmembrane helix</keyword>
<accession>A0A140IL91</accession>
<gene>
    <name evidence="4" type="primary">Cyp96T2</name>
</gene>